<comment type="function">
    <text evidence="1">Component of the NOP7 complex, which is required for maturation of the 25S and 5.8S ribosomal RNAs and formation of the 60S ribosome.</text>
</comment>
<comment type="subunit">
    <text evidence="1">Component of the NOP7 complex, composed of erb1, nop7 and ytm1. The complex is held together by erb1, which interacts with nop7 via its N-terminal domain and with ytm1 via a high-affinity interaction between the seven-bladed beta-propeller domains of the 2 proteins. The NOP7 complex associates with the 66S pre-ribosome. Interacts (via UBL domain) with mdn1 (via VWFA/MIDAS domain).</text>
</comment>
<comment type="subcellular location">
    <subcellularLocation>
        <location evidence="1">Nucleus</location>
        <location evidence="1">Nucleolus</location>
    </subcellularLocation>
    <subcellularLocation>
        <location evidence="1">Nucleus</location>
        <location evidence="1">Nucleoplasm</location>
    </subcellularLocation>
</comment>
<comment type="similarity">
    <text evidence="1">Belongs to the WD repeat WDR12/YTM1 family.</text>
</comment>
<sequence length="488" mass="51977">MEDIQNSASNADLSAAQRQVRVQLTSKQEDIALPDGTGPILVPTGLRRYALSTLVNNLLSNDKPIPFEFLINGTFLRTSIDEYLTANGISAETTLEIEYVRALIPPLHIASFQHDDWVSSTDVLSATSPAATWASAAISPGQERILSGSYDGLLRVWNMSSQVVATSPPAADGGHAASIKAAKFVTPNQIVSAGLDRTVRLWKYSESEDGFSGTIAPHLELYGHKSGINSLAVHAPSHRLLSASSDHSVGFWSTKKSDAPAAPENLLPSAAARSSKRRKLNSSVSVAQRGPVALLSSHTAPVSAAIFDAKDSTVGYSTSWDHSLRTWDLVTATLVDTRTASHSLLSLEHLPELSLLAAGTSARHITLIDPRASATTISAMTLRGHTNAVVSLARDPHSTYGLISGSHDGTCRIWDIRATKADKDGVVGESVYTISRKGLEEQGKADSKRVGGEGVKVFSVCWDKTIGIVSAGEDKRIQINRGEGMLSA</sequence>
<keyword id="KW-0539">Nucleus</keyword>
<keyword id="KW-1185">Reference proteome</keyword>
<keyword id="KW-0677">Repeat</keyword>
<keyword id="KW-0690">Ribosome biogenesis</keyword>
<keyword id="KW-0698">rRNA processing</keyword>
<keyword id="KW-0853">WD repeat</keyword>
<reference key="1">
    <citation type="journal article" date="2008" name="PLoS Genet.">
        <title>Genomic islands in the pathogenic filamentous fungus Aspergillus fumigatus.</title>
        <authorList>
            <person name="Fedorova N.D."/>
            <person name="Khaldi N."/>
            <person name="Joardar V.S."/>
            <person name="Maiti R."/>
            <person name="Amedeo P."/>
            <person name="Anderson M.J."/>
            <person name="Crabtree J."/>
            <person name="Silva J.C."/>
            <person name="Badger J.H."/>
            <person name="Albarraq A."/>
            <person name="Angiuoli S."/>
            <person name="Bussey H."/>
            <person name="Bowyer P."/>
            <person name="Cotty P.J."/>
            <person name="Dyer P.S."/>
            <person name="Egan A."/>
            <person name="Galens K."/>
            <person name="Fraser-Liggett C.M."/>
            <person name="Haas B.J."/>
            <person name="Inman J.M."/>
            <person name="Kent R."/>
            <person name="Lemieux S."/>
            <person name="Malavazi I."/>
            <person name="Orvis J."/>
            <person name="Roemer T."/>
            <person name="Ronning C.M."/>
            <person name="Sundaram J.P."/>
            <person name="Sutton G."/>
            <person name="Turner G."/>
            <person name="Venter J.C."/>
            <person name="White O.R."/>
            <person name="Whitty B.R."/>
            <person name="Youngman P."/>
            <person name="Wolfe K.H."/>
            <person name="Goldman G.H."/>
            <person name="Wortman J.R."/>
            <person name="Jiang B."/>
            <person name="Denning D.W."/>
            <person name="Nierman W.C."/>
        </authorList>
    </citation>
    <scope>NUCLEOTIDE SEQUENCE [LARGE SCALE GENOMIC DNA]</scope>
    <source>
        <strain>ATCC 1007 / CBS 513.65 / DSM 816 / NCTC 3887 / NRRL 1 / QM 1276 / 107</strain>
    </source>
</reference>
<name>YTM1_ASPCL</name>
<proteinExistence type="inferred from homology"/>
<feature type="chain" id="PRO_0000369574" description="Ribosome biogenesis protein ytm1">
    <location>
        <begin position="1"/>
        <end position="488"/>
    </location>
</feature>
<feature type="repeat" description="WD 1">
    <location>
        <begin position="128"/>
        <end position="167"/>
    </location>
</feature>
<feature type="repeat" description="WD 2">
    <location>
        <begin position="174"/>
        <end position="212"/>
    </location>
</feature>
<feature type="repeat" description="WD 3">
    <location>
        <begin position="223"/>
        <end position="262"/>
    </location>
</feature>
<feature type="repeat" description="WD 4">
    <location>
        <begin position="297"/>
        <end position="337"/>
    </location>
</feature>
<feature type="repeat" description="WD 5">
    <location>
        <begin position="339"/>
        <end position="378"/>
    </location>
</feature>
<feature type="repeat" description="WD 6">
    <location>
        <begin position="384"/>
        <end position="424"/>
    </location>
</feature>
<feature type="repeat" description="WD 7">
    <location>
        <begin position="452"/>
        <end position="488"/>
    </location>
</feature>
<feature type="region of interest" description="Ubiquitin-like (UBL) domain" evidence="1">
    <location>
        <begin position="20"/>
        <end position="101"/>
    </location>
</feature>
<dbReference type="EMBL" id="DS027054">
    <property type="protein sequence ID" value="EAW10230.1"/>
    <property type="molecule type" value="Genomic_DNA"/>
</dbReference>
<dbReference type="RefSeq" id="XP_001271656.1">
    <property type="nucleotide sequence ID" value="XM_001271655.1"/>
</dbReference>
<dbReference type="SMR" id="A1CH75"/>
<dbReference type="STRING" id="344612.A1CH75"/>
<dbReference type="EnsemblFungi" id="EAW10230">
    <property type="protein sequence ID" value="EAW10230"/>
    <property type="gene ID" value="ACLA_046950"/>
</dbReference>
<dbReference type="GeneID" id="4704389"/>
<dbReference type="KEGG" id="act:ACLA_046950"/>
<dbReference type="VEuPathDB" id="FungiDB:ACLA_046950"/>
<dbReference type="eggNOG" id="KOG0313">
    <property type="taxonomic scope" value="Eukaryota"/>
</dbReference>
<dbReference type="HOGENOM" id="CLU_000288_57_0_1"/>
<dbReference type="OMA" id="DHKYVEF"/>
<dbReference type="OrthoDB" id="10251381at2759"/>
<dbReference type="Proteomes" id="UP000006701">
    <property type="component" value="Unassembled WGS sequence"/>
</dbReference>
<dbReference type="GO" id="GO:0005654">
    <property type="term" value="C:nucleoplasm"/>
    <property type="evidence" value="ECO:0007669"/>
    <property type="project" value="UniProtKB-SubCell"/>
</dbReference>
<dbReference type="GO" id="GO:0070545">
    <property type="term" value="C:PeBoW complex"/>
    <property type="evidence" value="ECO:0007669"/>
    <property type="project" value="EnsemblFungi"/>
</dbReference>
<dbReference type="GO" id="GO:0030687">
    <property type="term" value="C:preribosome, large subunit precursor"/>
    <property type="evidence" value="ECO:0007669"/>
    <property type="project" value="UniProtKB-UniRule"/>
</dbReference>
<dbReference type="GO" id="GO:0043021">
    <property type="term" value="F:ribonucleoprotein complex binding"/>
    <property type="evidence" value="ECO:0007669"/>
    <property type="project" value="UniProtKB-UniRule"/>
</dbReference>
<dbReference type="GO" id="GO:0051276">
    <property type="term" value="P:chromosome organization"/>
    <property type="evidence" value="ECO:0007669"/>
    <property type="project" value="EnsemblFungi"/>
</dbReference>
<dbReference type="GO" id="GO:0000466">
    <property type="term" value="P:maturation of 5.8S rRNA from tricistronic rRNA transcript (SSU-rRNA, 5.8S rRNA, LSU-rRNA)"/>
    <property type="evidence" value="ECO:0007669"/>
    <property type="project" value="UniProtKB-UniRule"/>
</dbReference>
<dbReference type="GO" id="GO:0000463">
    <property type="term" value="P:maturation of LSU-rRNA from tricistronic rRNA transcript (SSU-rRNA, 5.8S rRNA, LSU-rRNA)"/>
    <property type="evidence" value="ECO:0007669"/>
    <property type="project" value="UniProtKB-UniRule"/>
</dbReference>
<dbReference type="GO" id="GO:0110136">
    <property type="term" value="P:protein-RNA complex remodeling"/>
    <property type="evidence" value="ECO:0007669"/>
    <property type="project" value="EnsemblFungi"/>
</dbReference>
<dbReference type="CDD" id="cd00200">
    <property type="entry name" value="WD40"/>
    <property type="match status" value="1"/>
</dbReference>
<dbReference type="FunFam" id="2.130.10.10:FF:000593">
    <property type="entry name" value="Ribosome biogenesis protein ytm1"/>
    <property type="match status" value="1"/>
</dbReference>
<dbReference type="Gene3D" id="2.130.10.10">
    <property type="entry name" value="YVTN repeat-like/Quinoprotein amine dehydrogenase"/>
    <property type="match status" value="1"/>
</dbReference>
<dbReference type="HAMAP" id="MF_03029">
    <property type="entry name" value="WDR12"/>
    <property type="match status" value="1"/>
</dbReference>
<dbReference type="InterPro" id="IPR020472">
    <property type="entry name" value="G-protein_beta_WD-40_rep"/>
</dbReference>
<dbReference type="InterPro" id="IPR012972">
    <property type="entry name" value="NLE"/>
</dbReference>
<dbReference type="InterPro" id="IPR015943">
    <property type="entry name" value="WD40/YVTN_repeat-like_dom_sf"/>
</dbReference>
<dbReference type="InterPro" id="IPR019775">
    <property type="entry name" value="WD40_repeat_CS"/>
</dbReference>
<dbReference type="InterPro" id="IPR036322">
    <property type="entry name" value="WD40_repeat_dom_sf"/>
</dbReference>
<dbReference type="InterPro" id="IPR001680">
    <property type="entry name" value="WD40_rpt"/>
</dbReference>
<dbReference type="InterPro" id="IPR028599">
    <property type="entry name" value="WDR12/Ytm1"/>
</dbReference>
<dbReference type="PANTHER" id="PTHR19855:SF11">
    <property type="entry name" value="RIBOSOME BIOGENESIS PROTEIN WDR12"/>
    <property type="match status" value="1"/>
</dbReference>
<dbReference type="PANTHER" id="PTHR19855">
    <property type="entry name" value="WD40 REPEAT PROTEIN 12, 37"/>
    <property type="match status" value="1"/>
</dbReference>
<dbReference type="Pfam" id="PF08154">
    <property type="entry name" value="NLE"/>
    <property type="match status" value="1"/>
</dbReference>
<dbReference type="Pfam" id="PF00400">
    <property type="entry name" value="WD40"/>
    <property type="match status" value="5"/>
</dbReference>
<dbReference type="PRINTS" id="PR00320">
    <property type="entry name" value="GPROTEINBRPT"/>
</dbReference>
<dbReference type="SMART" id="SM00320">
    <property type="entry name" value="WD40"/>
    <property type="match status" value="7"/>
</dbReference>
<dbReference type="SUPFAM" id="SSF50978">
    <property type="entry name" value="WD40 repeat-like"/>
    <property type="match status" value="1"/>
</dbReference>
<dbReference type="PROSITE" id="PS00678">
    <property type="entry name" value="WD_REPEATS_1"/>
    <property type="match status" value="2"/>
</dbReference>
<dbReference type="PROSITE" id="PS50082">
    <property type="entry name" value="WD_REPEATS_2"/>
    <property type="match status" value="5"/>
</dbReference>
<dbReference type="PROSITE" id="PS50294">
    <property type="entry name" value="WD_REPEATS_REGION"/>
    <property type="match status" value="1"/>
</dbReference>
<accession>A1CH75</accession>
<gene>
    <name type="primary">ytm1</name>
    <name type="ORF">ACLA_046950</name>
</gene>
<protein>
    <recommendedName>
        <fullName evidence="1">Ribosome biogenesis protein ytm1</fullName>
    </recommendedName>
</protein>
<evidence type="ECO:0000255" key="1">
    <source>
        <dbReference type="HAMAP-Rule" id="MF_03029"/>
    </source>
</evidence>
<organism>
    <name type="scientific">Aspergillus clavatus (strain ATCC 1007 / CBS 513.65 / DSM 816 / NCTC 3887 / NRRL 1 / QM 1276 / 107)</name>
    <dbReference type="NCBI Taxonomy" id="344612"/>
    <lineage>
        <taxon>Eukaryota</taxon>
        <taxon>Fungi</taxon>
        <taxon>Dikarya</taxon>
        <taxon>Ascomycota</taxon>
        <taxon>Pezizomycotina</taxon>
        <taxon>Eurotiomycetes</taxon>
        <taxon>Eurotiomycetidae</taxon>
        <taxon>Eurotiales</taxon>
        <taxon>Aspergillaceae</taxon>
        <taxon>Aspergillus</taxon>
        <taxon>Aspergillus subgen. Fumigati</taxon>
    </lineage>
</organism>